<feature type="chain" id="PRO_1000132893" description="V-type ATP synthase beta chain">
    <location>
        <begin position="1"/>
        <end position="460"/>
    </location>
</feature>
<gene>
    <name evidence="1" type="primary">atpB</name>
    <name type="ordered locus">CTN_0921</name>
</gene>
<name>VATB_THENN</name>
<protein>
    <recommendedName>
        <fullName evidence="1">V-type ATP synthase beta chain</fullName>
    </recommendedName>
    <alternativeName>
        <fullName evidence="1">V-ATPase subunit B</fullName>
    </alternativeName>
</protein>
<comment type="function">
    <text evidence="1">Produces ATP from ADP in the presence of a proton gradient across the membrane. The V-type beta chain is a regulatory subunit.</text>
</comment>
<comment type="similarity">
    <text evidence="1">Belongs to the ATPase alpha/beta chains family.</text>
</comment>
<sequence>MAVKEYTGLSEIRGPIVVVENVSGVRYDEVVELILENGEKRTGRVIIAGENVAIIQVFEGTEEMDIEGTRVRFLGKPLEVSLSPDLLGRTLDGLGKPRDNLGEIVPEKTVDINGSPINPSAREYPRNFIQTGISSIDVLMTLIRGQKLPIFAGNGLPYNRLAVQIARQAKVTTEEEFAVVFAAIGLRKDDANFIVRSLEESGAIKNMVVVLNLASDSVAERIATPRVALTIAEYLAFDLGMHVLVILNDMTNYCEALRELSNYRGEVPGRKGYPGYLYSDLASIYERAGIIKGRSGSITQIPILTMPNDDITHPIPDLTGYITEGQIVMSRSLFGKGIYPPIDILSSLSRLMKDGIGEGYTREDHPDVASQLFSAYSRVMEVRSIASIVGEEDLPEIDKLYLKFGEEFEHLFINQSFDEERSIEQSLDLAWKILSILPETELTRINREYIKKYYKASDET</sequence>
<reference key="1">
    <citation type="submission" date="2007-11" db="EMBL/GenBank/DDBJ databases">
        <title>The genome sequence of the hyperthermophilic bacterium Thermotoga neapolitana.</title>
        <authorList>
            <person name="Lim S.K."/>
            <person name="Kim J.S."/>
            <person name="Cha S.H."/>
            <person name="Park B.C."/>
            <person name="Lee D.S."/>
            <person name="Tae H.S."/>
            <person name="Kim S.-J."/>
            <person name="Kim J.J."/>
            <person name="Park K.J."/>
            <person name="Lee S.Y."/>
        </authorList>
    </citation>
    <scope>NUCLEOTIDE SEQUENCE [LARGE SCALE GENOMIC DNA]</scope>
    <source>
        <strain>ATCC 49049 / DSM 4359 / NBRC 107923 / NS-E</strain>
    </source>
</reference>
<dbReference type="EMBL" id="CP000916">
    <property type="protein sequence ID" value="ACM23097.1"/>
    <property type="molecule type" value="Genomic_DNA"/>
</dbReference>
<dbReference type="RefSeq" id="WP_015919414.1">
    <property type="nucleotide sequence ID" value="NC_011978.1"/>
</dbReference>
<dbReference type="SMR" id="B9K814"/>
<dbReference type="STRING" id="309803.CTN_0921"/>
<dbReference type="KEGG" id="tna:CTN_0921"/>
<dbReference type="eggNOG" id="COG1156">
    <property type="taxonomic scope" value="Bacteria"/>
</dbReference>
<dbReference type="HOGENOM" id="CLU_022916_0_0_0"/>
<dbReference type="Proteomes" id="UP000000445">
    <property type="component" value="Chromosome"/>
</dbReference>
<dbReference type="GO" id="GO:0005524">
    <property type="term" value="F:ATP binding"/>
    <property type="evidence" value="ECO:0007669"/>
    <property type="project" value="UniProtKB-UniRule"/>
</dbReference>
<dbReference type="GO" id="GO:0046933">
    <property type="term" value="F:proton-transporting ATP synthase activity, rotational mechanism"/>
    <property type="evidence" value="ECO:0007669"/>
    <property type="project" value="UniProtKB-UniRule"/>
</dbReference>
<dbReference type="GO" id="GO:0046961">
    <property type="term" value="F:proton-transporting ATPase activity, rotational mechanism"/>
    <property type="evidence" value="ECO:0007669"/>
    <property type="project" value="TreeGrafter"/>
</dbReference>
<dbReference type="GO" id="GO:0042777">
    <property type="term" value="P:proton motive force-driven plasma membrane ATP synthesis"/>
    <property type="evidence" value="ECO:0007669"/>
    <property type="project" value="UniProtKB-UniRule"/>
</dbReference>
<dbReference type="CDD" id="cd18112">
    <property type="entry name" value="ATP-synt_V_A-type_beta_C"/>
    <property type="match status" value="1"/>
</dbReference>
<dbReference type="CDD" id="cd18118">
    <property type="entry name" value="ATP-synt_V_A-type_beta_N"/>
    <property type="match status" value="1"/>
</dbReference>
<dbReference type="CDD" id="cd01135">
    <property type="entry name" value="V_A-ATPase_B"/>
    <property type="match status" value="1"/>
</dbReference>
<dbReference type="Gene3D" id="3.40.50.12240">
    <property type="match status" value="1"/>
</dbReference>
<dbReference type="HAMAP" id="MF_00310">
    <property type="entry name" value="ATP_synth_B_arch"/>
    <property type="match status" value="1"/>
</dbReference>
<dbReference type="InterPro" id="IPR055190">
    <property type="entry name" value="ATP-synt_VA_C"/>
</dbReference>
<dbReference type="InterPro" id="IPR004100">
    <property type="entry name" value="ATPase_F1/V1/A1_a/bsu_N"/>
</dbReference>
<dbReference type="InterPro" id="IPR000194">
    <property type="entry name" value="ATPase_F1/V1/A1_a/bsu_nucl-bd"/>
</dbReference>
<dbReference type="InterPro" id="IPR027417">
    <property type="entry name" value="P-loop_NTPase"/>
</dbReference>
<dbReference type="InterPro" id="IPR022879">
    <property type="entry name" value="V-ATPase_su_B/beta"/>
</dbReference>
<dbReference type="NCBIfam" id="NF003235">
    <property type="entry name" value="PRK04196.1"/>
    <property type="match status" value="1"/>
</dbReference>
<dbReference type="PANTHER" id="PTHR43389">
    <property type="entry name" value="V-TYPE PROTON ATPASE SUBUNIT B"/>
    <property type="match status" value="1"/>
</dbReference>
<dbReference type="PANTHER" id="PTHR43389:SF4">
    <property type="entry name" value="V-TYPE PROTON ATPASE SUBUNIT B"/>
    <property type="match status" value="1"/>
</dbReference>
<dbReference type="Pfam" id="PF00006">
    <property type="entry name" value="ATP-synt_ab"/>
    <property type="match status" value="1"/>
</dbReference>
<dbReference type="Pfam" id="PF02874">
    <property type="entry name" value="ATP-synt_ab_N"/>
    <property type="match status" value="1"/>
</dbReference>
<dbReference type="Pfam" id="PF22919">
    <property type="entry name" value="ATP-synt_VA_C"/>
    <property type="match status" value="1"/>
</dbReference>
<dbReference type="SUPFAM" id="SSF47917">
    <property type="entry name" value="C-terminal domain of alpha and beta subunits of F1 ATP synthase"/>
    <property type="match status" value="1"/>
</dbReference>
<dbReference type="SUPFAM" id="SSF52540">
    <property type="entry name" value="P-loop containing nucleoside triphosphate hydrolases"/>
    <property type="match status" value="1"/>
</dbReference>
<accession>B9K814</accession>
<keyword id="KW-0066">ATP synthesis</keyword>
<keyword id="KW-0375">Hydrogen ion transport</keyword>
<keyword id="KW-0406">Ion transport</keyword>
<keyword id="KW-0813">Transport</keyword>
<evidence type="ECO:0000255" key="1">
    <source>
        <dbReference type="HAMAP-Rule" id="MF_00310"/>
    </source>
</evidence>
<organism>
    <name type="scientific">Thermotoga neapolitana (strain ATCC 49049 / DSM 4359 / NBRC 107923 / NS-E)</name>
    <dbReference type="NCBI Taxonomy" id="309803"/>
    <lineage>
        <taxon>Bacteria</taxon>
        <taxon>Thermotogati</taxon>
        <taxon>Thermotogota</taxon>
        <taxon>Thermotogae</taxon>
        <taxon>Thermotogales</taxon>
        <taxon>Thermotogaceae</taxon>
        <taxon>Thermotoga</taxon>
    </lineage>
</organism>
<proteinExistence type="inferred from homology"/>